<accession>B8D742</accession>
<feature type="chain" id="PRO_1000123321" description="Probable endonuclease 4">
    <location>
        <begin position="1"/>
        <end position="281"/>
    </location>
</feature>
<feature type="binding site" evidence="1">
    <location>
        <position position="69"/>
    </location>
    <ligand>
        <name>Zn(2+)</name>
        <dbReference type="ChEBI" id="CHEBI:29105"/>
        <label>1</label>
    </ligand>
</feature>
<feature type="binding site" evidence="1">
    <location>
        <position position="109"/>
    </location>
    <ligand>
        <name>Zn(2+)</name>
        <dbReference type="ChEBI" id="CHEBI:29105"/>
        <label>1</label>
    </ligand>
</feature>
<feature type="binding site" evidence="1">
    <location>
        <position position="145"/>
    </location>
    <ligand>
        <name>Zn(2+)</name>
        <dbReference type="ChEBI" id="CHEBI:29105"/>
        <label>1</label>
    </ligand>
</feature>
<feature type="binding site" evidence="1">
    <location>
        <position position="145"/>
    </location>
    <ligand>
        <name>Zn(2+)</name>
        <dbReference type="ChEBI" id="CHEBI:29105"/>
        <label>2</label>
    </ligand>
</feature>
<feature type="binding site" evidence="1">
    <location>
        <position position="179"/>
    </location>
    <ligand>
        <name>Zn(2+)</name>
        <dbReference type="ChEBI" id="CHEBI:29105"/>
        <label>2</label>
    </ligand>
</feature>
<feature type="binding site" evidence="1">
    <location>
        <position position="182"/>
    </location>
    <ligand>
        <name>Zn(2+)</name>
        <dbReference type="ChEBI" id="CHEBI:29105"/>
        <label>3</label>
    </ligand>
</feature>
<feature type="binding site" evidence="1">
    <location>
        <position position="216"/>
    </location>
    <ligand>
        <name>Zn(2+)</name>
        <dbReference type="ChEBI" id="CHEBI:29105"/>
        <label>2</label>
    </ligand>
</feature>
<feature type="binding site" evidence="1">
    <location>
        <position position="229"/>
    </location>
    <ligand>
        <name>Zn(2+)</name>
        <dbReference type="ChEBI" id="CHEBI:29105"/>
        <label>3</label>
    </ligand>
</feature>
<feature type="binding site" evidence="1">
    <location>
        <position position="231"/>
    </location>
    <ligand>
        <name>Zn(2+)</name>
        <dbReference type="ChEBI" id="CHEBI:29105"/>
        <label>3</label>
    </ligand>
</feature>
<feature type="binding site" evidence="1">
    <location>
        <position position="261"/>
    </location>
    <ligand>
        <name>Zn(2+)</name>
        <dbReference type="ChEBI" id="CHEBI:29105"/>
        <label>2</label>
    </ligand>
</feature>
<comment type="function">
    <text evidence="1">Endonuclease IV plays a role in DNA repair. It cleaves phosphodiester bonds at apurinic or apyrimidinic (AP) sites, generating a 3'-hydroxyl group and a 5'-terminal sugar phosphate.</text>
</comment>
<comment type="catalytic activity">
    <reaction evidence="1">
        <text>Endonucleolytic cleavage to 5'-phosphooligonucleotide end-products.</text>
        <dbReference type="EC" id="3.1.21.2"/>
    </reaction>
</comment>
<comment type="cofactor">
    <cofactor evidence="1">
        <name>Zn(2+)</name>
        <dbReference type="ChEBI" id="CHEBI:29105"/>
    </cofactor>
    <text evidence="1">Binds 3 Zn(2+) ions.</text>
</comment>
<comment type="similarity">
    <text evidence="1">Belongs to the AP endonuclease 2 family.</text>
</comment>
<proteinExistence type="inferred from homology"/>
<dbReference type="EC" id="3.1.21.2" evidence="1"/>
<dbReference type="EMBL" id="CP001158">
    <property type="protein sequence ID" value="ACL29957.1"/>
    <property type="molecule type" value="Genomic_DNA"/>
</dbReference>
<dbReference type="RefSeq" id="WP_009874093.1">
    <property type="nucleotide sequence ID" value="NC_011834.1"/>
</dbReference>
<dbReference type="SMR" id="B8D742"/>
<dbReference type="KEGG" id="bau:BUAPTUC7_136"/>
<dbReference type="HOGENOM" id="CLU_025885_0_4_6"/>
<dbReference type="GO" id="GO:0008833">
    <property type="term" value="F:deoxyribonuclease IV (phage-T4-induced) activity"/>
    <property type="evidence" value="ECO:0007669"/>
    <property type="project" value="UniProtKB-UniRule"/>
</dbReference>
<dbReference type="GO" id="GO:0003677">
    <property type="term" value="F:DNA binding"/>
    <property type="evidence" value="ECO:0007669"/>
    <property type="project" value="InterPro"/>
</dbReference>
<dbReference type="GO" id="GO:0003906">
    <property type="term" value="F:DNA-(apurinic or apyrimidinic site) endonuclease activity"/>
    <property type="evidence" value="ECO:0007669"/>
    <property type="project" value="TreeGrafter"/>
</dbReference>
<dbReference type="GO" id="GO:0008081">
    <property type="term" value="F:phosphoric diester hydrolase activity"/>
    <property type="evidence" value="ECO:0007669"/>
    <property type="project" value="TreeGrafter"/>
</dbReference>
<dbReference type="GO" id="GO:0008270">
    <property type="term" value="F:zinc ion binding"/>
    <property type="evidence" value="ECO:0007669"/>
    <property type="project" value="UniProtKB-UniRule"/>
</dbReference>
<dbReference type="GO" id="GO:0006284">
    <property type="term" value="P:base-excision repair"/>
    <property type="evidence" value="ECO:0007669"/>
    <property type="project" value="TreeGrafter"/>
</dbReference>
<dbReference type="CDD" id="cd00019">
    <property type="entry name" value="AP2Ec"/>
    <property type="match status" value="1"/>
</dbReference>
<dbReference type="FunFam" id="3.20.20.150:FF:000001">
    <property type="entry name" value="Probable endonuclease 4"/>
    <property type="match status" value="1"/>
</dbReference>
<dbReference type="Gene3D" id="3.20.20.150">
    <property type="entry name" value="Divalent-metal-dependent TIM barrel enzymes"/>
    <property type="match status" value="1"/>
</dbReference>
<dbReference type="HAMAP" id="MF_00152">
    <property type="entry name" value="Nfo"/>
    <property type="match status" value="1"/>
</dbReference>
<dbReference type="InterPro" id="IPR001719">
    <property type="entry name" value="AP_endonuc_2"/>
</dbReference>
<dbReference type="InterPro" id="IPR018246">
    <property type="entry name" value="AP_endonuc_F2_Zn_BS"/>
</dbReference>
<dbReference type="InterPro" id="IPR036237">
    <property type="entry name" value="Xyl_isomerase-like_sf"/>
</dbReference>
<dbReference type="InterPro" id="IPR013022">
    <property type="entry name" value="Xyl_isomerase-like_TIM-brl"/>
</dbReference>
<dbReference type="NCBIfam" id="TIGR00587">
    <property type="entry name" value="nfo"/>
    <property type="match status" value="1"/>
</dbReference>
<dbReference type="NCBIfam" id="NF002199">
    <property type="entry name" value="PRK01060.1-4"/>
    <property type="match status" value="1"/>
</dbReference>
<dbReference type="PANTHER" id="PTHR21445:SF0">
    <property type="entry name" value="APURINIC-APYRIMIDINIC ENDONUCLEASE"/>
    <property type="match status" value="1"/>
</dbReference>
<dbReference type="PANTHER" id="PTHR21445">
    <property type="entry name" value="ENDONUCLEASE IV ENDODEOXYRIBONUCLEASE IV"/>
    <property type="match status" value="1"/>
</dbReference>
<dbReference type="Pfam" id="PF01261">
    <property type="entry name" value="AP_endonuc_2"/>
    <property type="match status" value="1"/>
</dbReference>
<dbReference type="SMART" id="SM00518">
    <property type="entry name" value="AP2Ec"/>
    <property type="match status" value="1"/>
</dbReference>
<dbReference type="SUPFAM" id="SSF51658">
    <property type="entry name" value="Xylose isomerase-like"/>
    <property type="match status" value="1"/>
</dbReference>
<dbReference type="PROSITE" id="PS00729">
    <property type="entry name" value="AP_NUCLEASE_F2_1"/>
    <property type="match status" value="1"/>
</dbReference>
<dbReference type="PROSITE" id="PS00730">
    <property type="entry name" value="AP_NUCLEASE_F2_2"/>
    <property type="match status" value="1"/>
</dbReference>
<dbReference type="PROSITE" id="PS00731">
    <property type="entry name" value="AP_NUCLEASE_F2_3"/>
    <property type="match status" value="1"/>
</dbReference>
<dbReference type="PROSITE" id="PS51432">
    <property type="entry name" value="AP_NUCLEASE_F2_4"/>
    <property type="match status" value="1"/>
</dbReference>
<evidence type="ECO:0000255" key="1">
    <source>
        <dbReference type="HAMAP-Rule" id="MF_00152"/>
    </source>
</evidence>
<keyword id="KW-0227">DNA damage</keyword>
<keyword id="KW-0234">DNA repair</keyword>
<keyword id="KW-0255">Endonuclease</keyword>
<keyword id="KW-0378">Hydrolase</keyword>
<keyword id="KW-0479">Metal-binding</keyword>
<keyword id="KW-0540">Nuclease</keyword>
<keyword id="KW-0862">Zinc</keyword>
<protein>
    <recommendedName>
        <fullName evidence="1">Probable endonuclease 4</fullName>
        <ecNumber evidence="1">3.1.21.2</ecNumber>
    </recommendedName>
    <alternativeName>
        <fullName evidence="1">Endodeoxyribonuclease IV</fullName>
    </alternativeName>
    <alternativeName>
        <fullName evidence="1">Endonuclease IV</fullName>
    </alternativeName>
</protein>
<gene>
    <name evidence="1" type="primary">nfo</name>
    <name type="ordered locus">BUAPTUC7_136</name>
</gene>
<organism>
    <name type="scientific">Buchnera aphidicola subsp. Acyrthosiphon pisum (strain Tuc7)</name>
    <dbReference type="NCBI Taxonomy" id="561501"/>
    <lineage>
        <taxon>Bacteria</taxon>
        <taxon>Pseudomonadati</taxon>
        <taxon>Pseudomonadota</taxon>
        <taxon>Gammaproteobacteria</taxon>
        <taxon>Enterobacterales</taxon>
        <taxon>Erwiniaceae</taxon>
        <taxon>Buchnera</taxon>
    </lineage>
</organism>
<reference key="1">
    <citation type="journal article" date="2009" name="Science">
        <title>The dynamics and time scale of ongoing genomic erosion in symbiotic bacteria.</title>
        <authorList>
            <person name="Moran N.A."/>
            <person name="McLaughlin H.J."/>
            <person name="Sorek R."/>
        </authorList>
    </citation>
    <scope>NUCLEOTIDE SEQUENCE [LARGE SCALE GENOMIC DNA]</scope>
    <source>
        <strain>Tuc7</strain>
    </source>
</reference>
<sequence length="281" mass="32020">MNYIGAHVSSSGGLEKTVLRAIQIKATAFSFFTKNQRQWFSPPLIQKKIDQFKAMCIKYSFQPQQILPHSSYLINLGHPIDELLRKSRKSFIDEMIRCSQLGLIFLNFHPGSHLNKITENACLLRVSDSINIALEKTQNVIAVIENTAGQGTNIGYCFEHLSEIIKNIDDKSRVGVCIDTCHLFASGYDLRTKKDCENTFEKFNSLIGLKYLKGIHLNDSKKKINSRVDRHESLGLGEIGTAAFTWIIKNENFSNIPIILETANPMIWEEEIDWLRSQKKL</sequence>
<name>END4_BUCAT</name>